<keyword id="KW-0903">Direct protein sequencing</keyword>
<keyword id="KW-1015">Disulfide bond</keyword>
<keyword id="KW-0872">Ion channel impairing toxin</keyword>
<keyword id="KW-0960">Knottin</keyword>
<keyword id="KW-0528">Neurotoxin</keyword>
<keyword id="KW-0964">Secreted</keyword>
<keyword id="KW-0800">Toxin</keyword>
<keyword id="KW-0738">Voltage-gated sodium channel impairing toxin</keyword>
<feature type="chain" id="PRO_0000087630" description="Delta-ctenitoxin-Pr2d">
    <location>
        <begin position="1"/>
        <end position="47"/>
    </location>
</feature>
<feature type="disulfide bond" evidence="3">
    <location>
        <begin position="3"/>
        <end position="17"/>
    </location>
</feature>
<feature type="disulfide bond" evidence="3">
    <location>
        <begin position="10"/>
        <end position="23"/>
    </location>
</feature>
<feature type="disulfide bond" evidence="3">
    <location>
        <begin position="14"/>
        <end position="46"/>
    </location>
</feature>
<feature type="disulfide bond" evidence="3">
    <location>
        <begin position="16"/>
        <end position="31"/>
    </location>
</feature>
<feature type="disulfide bond" evidence="3">
    <location>
        <begin position="25"/>
        <end position="29"/>
    </location>
</feature>
<proteinExistence type="evidence at protein level"/>
<accession>P83904</accession>
<evidence type="ECO:0000269" key="1">
    <source>
    </source>
</evidence>
<evidence type="ECO:0000269" key="2">
    <source ref="2"/>
</evidence>
<evidence type="ECO:0000305" key="3"/>
<dbReference type="SMR" id="P83904"/>
<dbReference type="ArachnoServer" id="AS000259">
    <property type="toxin name" value="delta-ctenitoxin-Pr2d"/>
</dbReference>
<dbReference type="GO" id="GO:0005576">
    <property type="term" value="C:extracellular region"/>
    <property type="evidence" value="ECO:0007669"/>
    <property type="project" value="UniProtKB-SubCell"/>
</dbReference>
<dbReference type="GO" id="GO:0017080">
    <property type="term" value="F:sodium channel regulator activity"/>
    <property type="evidence" value="ECO:0007669"/>
    <property type="project" value="UniProtKB-KW"/>
</dbReference>
<dbReference type="GO" id="GO:0090729">
    <property type="term" value="F:toxin activity"/>
    <property type="evidence" value="ECO:0007669"/>
    <property type="project" value="UniProtKB-KW"/>
</dbReference>
<dbReference type="InterPro" id="IPR035285">
    <property type="entry name" value="CNTX"/>
</dbReference>
<dbReference type="Pfam" id="PF17492">
    <property type="entry name" value="D_CNTX"/>
    <property type="match status" value="1"/>
</dbReference>
<organism evidence="3">
    <name type="scientific">Phoneutria reidyi</name>
    <name type="common">Brazilian Amazonian armed spider</name>
    <name type="synonym">Ctenus reidyi</name>
    <dbReference type="NCBI Taxonomy" id="272752"/>
    <lineage>
        <taxon>Eukaryota</taxon>
        <taxon>Metazoa</taxon>
        <taxon>Ecdysozoa</taxon>
        <taxon>Arthropoda</taxon>
        <taxon>Chelicerata</taxon>
        <taxon>Arachnida</taxon>
        <taxon>Araneae</taxon>
        <taxon>Araneomorphae</taxon>
        <taxon>Entelegynae</taxon>
        <taxon>Lycosoidea</taxon>
        <taxon>Ctenidae</taxon>
        <taxon>Phoneutria</taxon>
    </lineage>
</organism>
<reference key="1">
    <citation type="journal article" date="2006" name="Comp. Biochem. Physiol.">
        <title>Comparison of the partial proteomes of the venoms of Brazilian spiders of the genus Phoneutria.</title>
        <authorList>
            <person name="Richardson M."/>
            <person name="Pimenta A.M."/>
            <person name="Bemquerer M.P."/>
            <person name="Santoro M.M."/>
            <person name="Beirao P.S."/>
            <person name="Lima M.E."/>
            <person name="Figueiredo S.G."/>
            <person name="Bloch C. Jr."/>
            <person name="Vasconcelos E.A."/>
            <person name="Campos F.A."/>
            <person name="Gomes P.C."/>
            <person name="Cordeiro M.N."/>
        </authorList>
    </citation>
    <scope>PROTEIN SEQUENCE</scope>
    <scope>SUBCELLULAR LOCATION</scope>
    <scope>TISSUE SPECIFICITY</scope>
    <scope>MASS SPECTROMETRY</scope>
    <source>
        <tissue>Venom</tissue>
    </source>
</reference>
<reference evidence="3" key="2">
    <citation type="submission" date="2004-04" db="UniProtKB">
        <title>New neurotoxin PRTx32C1 from venom of Brazilian Amazonian armed spider Phoneutria reidyi.</title>
        <authorList>
            <person name="Richardson M."/>
            <person name="Pimenta A.M.C."/>
            <person name="Bemquerer M.P."/>
            <person name="Santoro M.M."/>
            <person name="Figueiredo S.G."/>
            <person name="Cordeiro M.N."/>
        </authorList>
    </citation>
    <scope>FUNCTION</scope>
</reference>
<comment type="function">
    <text evidence="2">Blocks voltage-gated sodium channels (Nav). Causes rapid general spastic paralysis and death when injected in mice at dose levels of less than 2 ug per mouse.</text>
</comment>
<comment type="subcellular location">
    <subcellularLocation>
        <location evidence="1 3">Secreted</location>
    </subcellularLocation>
</comment>
<comment type="tissue specificity">
    <text evidence="1 3">Expressed by the venom gland.</text>
</comment>
<comment type="domain">
    <text evidence="3">The presence of a 'disulfide through disulfide knot' structurally defines this protein as a knottin.</text>
</comment>
<comment type="mass spectrometry"/>
<comment type="similarity">
    <text evidence="3">Belongs to the neurotoxin 03 (Tx2) family. 06 subfamily.</text>
</comment>
<sequence>GTCAGQDKPCKETCDCCGERGQCVCEGPCICRQGYFWIAAYKLGNCK</sequence>
<name>TX36A_PHORI</name>
<protein>
    <recommendedName>
        <fullName>Delta-ctenitoxin-Pr2d</fullName>
        <shortName>Delta-CNTX-Pr2d</shortName>
    </recommendedName>
    <alternativeName>
        <fullName>Neurotoxin PRTx32C1</fullName>
    </alternativeName>
</protein>